<comment type="function">
    <text evidence="1">Catalyzes the decarboxylation of 3-octaprenyl-4-hydroxy benzoate to 2-octaprenylphenol, an intermediate step in ubiquinone biosynthesis.</text>
</comment>
<comment type="catalytic activity">
    <reaction evidence="1">
        <text>a 4-hydroxy-3-(all-trans-polyprenyl)benzoate + H(+) = a 2-(all-trans-polyprenyl)phenol + CO2</text>
        <dbReference type="Rhea" id="RHEA:41680"/>
        <dbReference type="Rhea" id="RHEA-COMP:9514"/>
        <dbReference type="Rhea" id="RHEA-COMP:9516"/>
        <dbReference type="ChEBI" id="CHEBI:1269"/>
        <dbReference type="ChEBI" id="CHEBI:15378"/>
        <dbReference type="ChEBI" id="CHEBI:16526"/>
        <dbReference type="ChEBI" id="CHEBI:78396"/>
        <dbReference type="EC" id="4.1.1.98"/>
    </reaction>
</comment>
<comment type="cofactor">
    <cofactor evidence="1">
        <name>prenylated FMN</name>
        <dbReference type="ChEBI" id="CHEBI:87746"/>
    </cofactor>
    <text evidence="1">Binds 1 prenylated FMN per subunit.</text>
</comment>
<comment type="cofactor">
    <cofactor evidence="1">
        <name>Mn(2+)</name>
        <dbReference type="ChEBI" id="CHEBI:29035"/>
    </cofactor>
</comment>
<comment type="pathway">
    <text evidence="1">Cofactor biosynthesis; ubiquinone biosynthesis.</text>
</comment>
<comment type="subunit">
    <text evidence="1">Homohexamer.</text>
</comment>
<comment type="subcellular location">
    <subcellularLocation>
        <location evidence="1">Cell membrane</location>
        <topology evidence="1">Peripheral membrane protein</topology>
    </subcellularLocation>
</comment>
<comment type="similarity">
    <text evidence="1">Belongs to the UbiD family.</text>
</comment>
<reference key="1">
    <citation type="journal article" date="2009" name="PLoS Genet.">
        <title>The complete genome and proteome of Laribacter hongkongensis reveal potential mechanisms for adaptations to different temperatures and habitats.</title>
        <authorList>
            <person name="Woo P.C.Y."/>
            <person name="Lau S.K.P."/>
            <person name="Tse H."/>
            <person name="Teng J.L.L."/>
            <person name="Curreem S.O."/>
            <person name="Tsang A.K.L."/>
            <person name="Fan R.Y.Y."/>
            <person name="Wong G.K.M."/>
            <person name="Huang Y."/>
            <person name="Loman N.J."/>
            <person name="Snyder L.A.S."/>
            <person name="Cai J.J."/>
            <person name="Huang J.-D."/>
            <person name="Mak W."/>
            <person name="Pallen M.J."/>
            <person name="Lok S."/>
            <person name="Yuen K.-Y."/>
        </authorList>
    </citation>
    <scope>NUCLEOTIDE SEQUENCE [LARGE SCALE GENOMIC DNA]</scope>
    <source>
        <strain>HLHK9</strain>
    </source>
</reference>
<feature type="chain" id="PRO_1000186716" description="3-octaprenyl-4-hydroxybenzoate carboxy-lyase">
    <location>
        <begin position="1"/>
        <end position="511"/>
    </location>
</feature>
<feature type="active site" description="Proton donor" evidence="1">
    <location>
        <position position="311"/>
    </location>
</feature>
<feature type="binding site" evidence="1">
    <location>
        <position position="176"/>
    </location>
    <ligand>
        <name>Mn(2+)</name>
        <dbReference type="ChEBI" id="CHEBI:29035"/>
    </ligand>
</feature>
<feature type="binding site" evidence="1">
    <location>
        <begin position="179"/>
        <end position="181"/>
    </location>
    <ligand>
        <name>prenylated FMN</name>
        <dbReference type="ChEBI" id="CHEBI:87746"/>
    </ligand>
</feature>
<feature type="binding site" evidence="1">
    <location>
        <begin position="193"/>
        <end position="195"/>
    </location>
    <ligand>
        <name>prenylated FMN</name>
        <dbReference type="ChEBI" id="CHEBI:87746"/>
    </ligand>
</feature>
<feature type="binding site" evidence="1">
    <location>
        <begin position="198"/>
        <end position="199"/>
    </location>
    <ligand>
        <name>prenylated FMN</name>
        <dbReference type="ChEBI" id="CHEBI:87746"/>
    </ligand>
</feature>
<feature type="binding site" evidence="1">
    <location>
        <position position="242"/>
    </location>
    <ligand>
        <name>Mn(2+)</name>
        <dbReference type="ChEBI" id="CHEBI:29035"/>
    </ligand>
</feature>
<protein>
    <recommendedName>
        <fullName evidence="1">3-octaprenyl-4-hydroxybenzoate carboxy-lyase</fullName>
        <ecNumber evidence="1">4.1.1.98</ecNumber>
    </recommendedName>
    <alternativeName>
        <fullName evidence="1">Polyprenyl p-hydroxybenzoate decarboxylase</fullName>
    </alternativeName>
</protein>
<gene>
    <name evidence="1" type="primary">ubiD</name>
    <name type="ordered locus">LHK_02681</name>
</gene>
<dbReference type="EC" id="4.1.1.98" evidence="1"/>
<dbReference type="EMBL" id="CP001154">
    <property type="protein sequence ID" value="ACO75662.1"/>
    <property type="molecule type" value="Genomic_DNA"/>
</dbReference>
<dbReference type="RefSeq" id="WP_012698126.1">
    <property type="nucleotide sequence ID" value="NC_012559.1"/>
</dbReference>
<dbReference type="SMR" id="C1DCP3"/>
<dbReference type="STRING" id="557598.LHK_02681"/>
<dbReference type="KEGG" id="lhk:LHK_02681"/>
<dbReference type="eggNOG" id="COG0043">
    <property type="taxonomic scope" value="Bacteria"/>
</dbReference>
<dbReference type="HOGENOM" id="CLU_023348_4_1_4"/>
<dbReference type="UniPathway" id="UPA00232"/>
<dbReference type="Proteomes" id="UP000002010">
    <property type="component" value="Chromosome"/>
</dbReference>
<dbReference type="GO" id="GO:0005829">
    <property type="term" value="C:cytosol"/>
    <property type="evidence" value="ECO:0007669"/>
    <property type="project" value="TreeGrafter"/>
</dbReference>
<dbReference type="GO" id="GO:0005886">
    <property type="term" value="C:plasma membrane"/>
    <property type="evidence" value="ECO:0007669"/>
    <property type="project" value="UniProtKB-SubCell"/>
</dbReference>
<dbReference type="GO" id="GO:0008694">
    <property type="term" value="F:3-octaprenyl-4-hydroxybenzoate carboxy-lyase activity"/>
    <property type="evidence" value="ECO:0007669"/>
    <property type="project" value="UniProtKB-UniRule"/>
</dbReference>
<dbReference type="GO" id="GO:0046872">
    <property type="term" value="F:metal ion binding"/>
    <property type="evidence" value="ECO:0007669"/>
    <property type="project" value="UniProtKB-KW"/>
</dbReference>
<dbReference type="GO" id="GO:0006744">
    <property type="term" value="P:ubiquinone biosynthetic process"/>
    <property type="evidence" value="ECO:0007669"/>
    <property type="project" value="UniProtKB-UniRule"/>
</dbReference>
<dbReference type="FunFam" id="1.20.5.570:FF:000001">
    <property type="entry name" value="3-octaprenyl-4-hydroxybenzoate carboxy-lyase"/>
    <property type="match status" value="1"/>
</dbReference>
<dbReference type="FunFam" id="3.40.1670.10:FF:000001">
    <property type="entry name" value="3-octaprenyl-4-hydroxybenzoate carboxy-lyase"/>
    <property type="match status" value="1"/>
</dbReference>
<dbReference type="Gene3D" id="1.20.5.570">
    <property type="entry name" value="Single helix bin"/>
    <property type="match status" value="1"/>
</dbReference>
<dbReference type="Gene3D" id="3.40.1670.10">
    <property type="entry name" value="UbiD C-terminal domain-like"/>
    <property type="match status" value="1"/>
</dbReference>
<dbReference type="HAMAP" id="MF_01636">
    <property type="entry name" value="UbiD"/>
    <property type="match status" value="1"/>
</dbReference>
<dbReference type="InterPro" id="IPR002830">
    <property type="entry name" value="UbiD"/>
</dbReference>
<dbReference type="InterPro" id="IPR049381">
    <property type="entry name" value="UbiD-like_C"/>
</dbReference>
<dbReference type="InterPro" id="IPR049383">
    <property type="entry name" value="UbiD-like_N"/>
</dbReference>
<dbReference type="InterPro" id="IPR023677">
    <property type="entry name" value="UbiD_bacteria"/>
</dbReference>
<dbReference type="InterPro" id="IPR048304">
    <property type="entry name" value="UbiD_Rift_dom"/>
</dbReference>
<dbReference type="NCBIfam" id="NF008175">
    <property type="entry name" value="PRK10922.1"/>
    <property type="match status" value="1"/>
</dbReference>
<dbReference type="NCBIfam" id="TIGR00148">
    <property type="entry name" value="UbiD family decarboxylase"/>
    <property type="match status" value="2"/>
</dbReference>
<dbReference type="PANTHER" id="PTHR30108">
    <property type="entry name" value="3-OCTAPRENYL-4-HYDROXYBENZOATE CARBOXY-LYASE-RELATED"/>
    <property type="match status" value="1"/>
</dbReference>
<dbReference type="PANTHER" id="PTHR30108:SF17">
    <property type="entry name" value="FERULIC ACID DECARBOXYLASE 1"/>
    <property type="match status" value="1"/>
</dbReference>
<dbReference type="Pfam" id="PF01977">
    <property type="entry name" value="UbiD"/>
    <property type="match status" value="1"/>
</dbReference>
<dbReference type="Pfam" id="PF20696">
    <property type="entry name" value="UbiD_C"/>
    <property type="match status" value="1"/>
</dbReference>
<dbReference type="Pfam" id="PF20695">
    <property type="entry name" value="UbiD_N"/>
    <property type="match status" value="1"/>
</dbReference>
<dbReference type="SUPFAM" id="SSF50475">
    <property type="entry name" value="FMN-binding split barrel"/>
    <property type="match status" value="1"/>
</dbReference>
<dbReference type="SUPFAM" id="SSF143968">
    <property type="entry name" value="UbiD C-terminal domain-like"/>
    <property type="match status" value="1"/>
</dbReference>
<keyword id="KW-1003">Cell membrane</keyword>
<keyword id="KW-0210">Decarboxylase</keyword>
<keyword id="KW-0285">Flavoprotein</keyword>
<keyword id="KW-0288">FMN</keyword>
<keyword id="KW-0456">Lyase</keyword>
<keyword id="KW-0464">Manganese</keyword>
<keyword id="KW-0472">Membrane</keyword>
<keyword id="KW-0479">Metal-binding</keyword>
<keyword id="KW-1185">Reference proteome</keyword>
<keyword id="KW-0831">Ubiquinone biosynthesis</keyword>
<accession>C1DCP3</accession>
<proteinExistence type="inferred from homology"/>
<evidence type="ECO:0000255" key="1">
    <source>
        <dbReference type="HAMAP-Rule" id="MF_01636"/>
    </source>
</evidence>
<name>UBID_LARHH</name>
<organism>
    <name type="scientific">Laribacter hongkongensis (strain HLHK9)</name>
    <dbReference type="NCBI Taxonomy" id="557598"/>
    <lineage>
        <taxon>Bacteria</taxon>
        <taxon>Pseudomonadati</taxon>
        <taxon>Pseudomonadota</taxon>
        <taxon>Betaproteobacteria</taxon>
        <taxon>Neisseriales</taxon>
        <taxon>Aquaspirillaceae</taxon>
        <taxon>Laribacter</taxon>
    </lineage>
</organism>
<sequence>MHYRDLRDFIAALETRGELKRVGQPVSPRLEMTDLCDRTLRAEGPALLFEAPQTGNTRYASPVLGNLFGTPRRVALGMGAENVSALRDIGQLLAMLKEPEPPKGLRDAWDKFPLYKKVLDMAPKTIRRAPVQEVVEEGPEVDLARLPVWHCWPGDVAPLITWGLTVTRGPAKKRQNLGIYRQQVISRNQVIMRWLAHRGGALDFRDWRRTRPGEPFPVSVVLGCDPATILGAVTPVPDTLSEYQFAGLLRGSRTELTQSLGNDLQVPAFAEIVLEGHLSPCEAGFSGVSEHGIPLKEIDGYLHALEGPYGDHTGYYNEQDWFPVFTIDRLTRRPDAIYHSTYTGKPIDEPAVLGVALNEVFVPILQKQFPEIVDFYLPPEGCSYRMAVVSIRKQYAGHAKRVMMGCWSFLRQFMYTKFIVVVDDDIDTRDWKEVMWAITTRMDPVRDTVLVENTPIDYLDFASPVSGLGGKMGMDATNKWPGETDREWGRPIVKDAAVAARVDQLWQTLGL</sequence>